<dbReference type="EC" id="6.3.4.4" evidence="1"/>
<dbReference type="EMBL" id="AE016879">
    <property type="protein sequence ID" value="AAP29348.1"/>
    <property type="molecule type" value="Genomic_DNA"/>
</dbReference>
<dbReference type="EMBL" id="AE017334">
    <property type="protein sequence ID" value="AAT34877.1"/>
    <property type="molecule type" value="Genomic_DNA"/>
</dbReference>
<dbReference type="EMBL" id="AE017225">
    <property type="protein sequence ID" value="AAT57607.1"/>
    <property type="molecule type" value="Genomic_DNA"/>
</dbReference>
<dbReference type="RefSeq" id="NP_847862.1">
    <property type="nucleotide sequence ID" value="NC_003997.3"/>
</dbReference>
<dbReference type="RefSeq" id="WP_000100223.1">
    <property type="nucleotide sequence ID" value="NZ_WXXJ01000028.1"/>
</dbReference>
<dbReference type="RefSeq" id="YP_031557.1">
    <property type="nucleotide sequence ID" value="NC_005945.1"/>
</dbReference>
<dbReference type="PDB" id="4M0G">
    <property type="method" value="X-ray"/>
    <property type="resolution" value="2.15 A"/>
    <property type="chains" value="A/B=1-429"/>
</dbReference>
<dbReference type="PDB" id="4M9D">
    <property type="method" value="X-ray"/>
    <property type="resolution" value="1.82 A"/>
    <property type="chains" value="A/B=1-429"/>
</dbReference>
<dbReference type="PDBsum" id="4M0G"/>
<dbReference type="PDBsum" id="4M9D"/>
<dbReference type="SMR" id="Q81JI9"/>
<dbReference type="IntAct" id="Q81JI9">
    <property type="interactions" value="1"/>
</dbReference>
<dbReference type="STRING" id="261594.GBAA_5716"/>
<dbReference type="DNASU" id="1085481"/>
<dbReference type="GeneID" id="45025295"/>
<dbReference type="KEGG" id="ban:BA_5716"/>
<dbReference type="KEGG" id="bar:GBAA_5716"/>
<dbReference type="KEGG" id="bat:BAS5320"/>
<dbReference type="PATRIC" id="fig|198094.11.peg.5678"/>
<dbReference type="eggNOG" id="COG0104">
    <property type="taxonomic scope" value="Bacteria"/>
</dbReference>
<dbReference type="HOGENOM" id="CLU_029848_0_0_9"/>
<dbReference type="OMA" id="FHHAKPI"/>
<dbReference type="OrthoDB" id="9807553at2"/>
<dbReference type="UniPathway" id="UPA00075">
    <property type="reaction ID" value="UER00335"/>
</dbReference>
<dbReference type="EvolutionaryTrace" id="Q81JI9"/>
<dbReference type="Proteomes" id="UP000000427">
    <property type="component" value="Chromosome"/>
</dbReference>
<dbReference type="Proteomes" id="UP000000594">
    <property type="component" value="Chromosome"/>
</dbReference>
<dbReference type="GO" id="GO:0005737">
    <property type="term" value="C:cytoplasm"/>
    <property type="evidence" value="ECO:0007669"/>
    <property type="project" value="UniProtKB-SubCell"/>
</dbReference>
<dbReference type="GO" id="GO:0004019">
    <property type="term" value="F:adenylosuccinate synthase activity"/>
    <property type="evidence" value="ECO:0007669"/>
    <property type="project" value="UniProtKB-UniRule"/>
</dbReference>
<dbReference type="GO" id="GO:0005525">
    <property type="term" value="F:GTP binding"/>
    <property type="evidence" value="ECO:0007669"/>
    <property type="project" value="UniProtKB-UniRule"/>
</dbReference>
<dbReference type="GO" id="GO:0000287">
    <property type="term" value="F:magnesium ion binding"/>
    <property type="evidence" value="ECO:0007669"/>
    <property type="project" value="UniProtKB-UniRule"/>
</dbReference>
<dbReference type="GO" id="GO:0044208">
    <property type="term" value="P:'de novo' AMP biosynthetic process"/>
    <property type="evidence" value="ECO:0007669"/>
    <property type="project" value="UniProtKB-UniRule"/>
</dbReference>
<dbReference type="GO" id="GO:0046040">
    <property type="term" value="P:IMP metabolic process"/>
    <property type="evidence" value="ECO:0007669"/>
    <property type="project" value="TreeGrafter"/>
</dbReference>
<dbReference type="CDD" id="cd03108">
    <property type="entry name" value="AdSS"/>
    <property type="match status" value="1"/>
</dbReference>
<dbReference type="FunFam" id="1.10.300.10:FF:000001">
    <property type="entry name" value="Adenylosuccinate synthetase"/>
    <property type="match status" value="1"/>
</dbReference>
<dbReference type="FunFam" id="3.90.170.10:FF:000001">
    <property type="entry name" value="Adenylosuccinate synthetase"/>
    <property type="match status" value="1"/>
</dbReference>
<dbReference type="Gene3D" id="3.40.440.10">
    <property type="entry name" value="Adenylosuccinate Synthetase, subunit A, domain 1"/>
    <property type="match status" value="1"/>
</dbReference>
<dbReference type="Gene3D" id="1.10.300.10">
    <property type="entry name" value="Adenylosuccinate Synthetase, subunit A, domain 2"/>
    <property type="match status" value="1"/>
</dbReference>
<dbReference type="Gene3D" id="3.90.170.10">
    <property type="entry name" value="Adenylosuccinate Synthetase, subunit A, domain 3"/>
    <property type="match status" value="1"/>
</dbReference>
<dbReference type="HAMAP" id="MF_00011">
    <property type="entry name" value="Adenylosucc_synth"/>
    <property type="match status" value="1"/>
</dbReference>
<dbReference type="InterPro" id="IPR018220">
    <property type="entry name" value="Adenylosuccin_syn_GTP-bd"/>
</dbReference>
<dbReference type="InterPro" id="IPR033128">
    <property type="entry name" value="Adenylosuccin_syn_Lys_AS"/>
</dbReference>
<dbReference type="InterPro" id="IPR042109">
    <property type="entry name" value="Adenylosuccinate_synth_dom1"/>
</dbReference>
<dbReference type="InterPro" id="IPR042110">
    <property type="entry name" value="Adenylosuccinate_synth_dom2"/>
</dbReference>
<dbReference type="InterPro" id="IPR042111">
    <property type="entry name" value="Adenylosuccinate_synth_dom3"/>
</dbReference>
<dbReference type="InterPro" id="IPR001114">
    <property type="entry name" value="Adenylosuccinate_synthetase"/>
</dbReference>
<dbReference type="InterPro" id="IPR027417">
    <property type="entry name" value="P-loop_NTPase"/>
</dbReference>
<dbReference type="NCBIfam" id="NF002223">
    <property type="entry name" value="PRK01117.1"/>
    <property type="match status" value="1"/>
</dbReference>
<dbReference type="NCBIfam" id="TIGR00184">
    <property type="entry name" value="purA"/>
    <property type="match status" value="1"/>
</dbReference>
<dbReference type="PANTHER" id="PTHR11846">
    <property type="entry name" value="ADENYLOSUCCINATE SYNTHETASE"/>
    <property type="match status" value="1"/>
</dbReference>
<dbReference type="PANTHER" id="PTHR11846:SF0">
    <property type="entry name" value="ADENYLOSUCCINATE SYNTHETASE"/>
    <property type="match status" value="1"/>
</dbReference>
<dbReference type="Pfam" id="PF00709">
    <property type="entry name" value="Adenylsucc_synt"/>
    <property type="match status" value="1"/>
</dbReference>
<dbReference type="SMART" id="SM00788">
    <property type="entry name" value="Adenylsucc_synt"/>
    <property type="match status" value="1"/>
</dbReference>
<dbReference type="SUPFAM" id="SSF52540">
    <property type="entry name" value="P-loop containing nucleoside triphosphate hydrolases"/>
    <property type="match status" value="1"/>
</dbReference>
<dbReference type="PROSITE" id="PS01266">
    <property type="entry name" value="ADENYLOSUCCIN_SYN_1"/>
    <property type="match status" value="1"/>
</dbReference>
<dbReference type="PROSITE" id="PS00513">
    <property type="entry name" value="ADENYLOSUCCIN_SYN_2"/>
    <property type="match status" value="1"/>
</dbReference>
<gene>
    <name evidence="1" type="primary">purA</name>
    <name type="ordered locus">BA_5716</name>
    <name type="ordered locus">GBAA_5716</name>
    <name type="ordered locus">BAS5320</name>
</gene>
<comment type="function">
    <text evidence="1">Plays an important role in the de novo pathway of purine nucleotide biosynthesis. Catalyzes the first committed step in the biosynthesis of AMP from IMP.</text>
</comment>
<comment type="catalytic activity">
    <reaction evidence="1">
        <text>IMP + L-aspartate + GTP = N(6)-(1,2-dicarboxyethyl)-AMP + GDP + phosphate + 2 H(+)</text>
        <dbReference type="Rhea" id="RHEA:15753"/>
        <dbReference type="ChEBI" id="CHEBI:15378"/>
        <dbReference type="ChEBI" id="CHEBI:29991"/>
        <dbReference type="ChEBI" id="CHEBI:37565"/>
        <dbReference type="ChEBI" id="CHEBI:43474"/>
        <dbReference type="ChEBI" id="CHEBI:57567"/>
        <dbReference type="ChEBI" id="CHEBI:58053"/>
        <dbReference type="ChEBI" id="CHEBI:58189"/>
        <dbReference type="EC" id="6.3.4.4"/>
    </reaction>
</comment>
<comment type="cofactor">
    <cofactor evidence="1">
        <name>Mg(2+)</name>
        <dbReference type="ChEBI" id="CHEBI:18420"/>
    </cofactor>
    <text evidence="1">Binds 1 Mg(2+) ion per subunit.</text>
</comment>
<comment type="pathway">
    <text evidence="1">Purine metabolism; AMP biosynthesis via de novo pathway; AMP from IMP: step 1/2.</text>
</comment>
<comment type="subunit">
    <text evidence="1">Homodimer.</text>
</comment>
<comment type="subcellular location">
    <subcellularLocation>
        <location evidence="1">Cytoplasm</location>
    </subcellularLocation>
</comment>
<comment type="similarity">
    <text evidence="1">Belongs to the adenylosuccinate synthetase family.</text>
</comment>
<name>PURA_BACAN</name>
<keyword id="KW-0002">3D-structure</keyword>
<keyword id="KW-0963">Cytoplasm</keyword>
<keyword id="KW-0342">GTP-binding</keyword>
<keyword id="KW-0436">Ligase</keyword>
<keyword id="KW-0460">Magnesium</keyword>
<keyword id="KW-0479">Metal-binding</keyword>
<keyword id="KW-0547">Nucleotide-binding</keyword>
<keyword id="KW-0658">Purine biosynthesis</keyword>
<keyword id="KW-1185">Reference proteome</keyword>
<accession>Q81JI9</accession>
<accession>Q6HQ31</accession>
<accession>Q6KJH5</accession>
<reference key="1">
    <citation type="journal article" date="2003" name="Nature">
        <title>The genome sequence of Bacillus anthracis Ames and comparison to closely related bacteria.</title>
        <authorList>
            <person name="Read T.D."/>
            <person name="Peterson S.N."/>
            <person name="Tourasse N.J."/>
            <person name="Baillie L.W."/>
            <person name="Paulsen I.T."/>
            <person name="Nelson K.E."/>
            <person name="Tettelin H."/>
            <person name="Fouts D.E."/>
            <person name="Eisen J.A."/>
            <person name="Gill S.R."/>
            <person name="Holtzapple E.K."/>
            <person name="Okstad O.A."/>
            <person name="Helgason E."/>
            <person name="Rilstone J."/>
            <person name="Wu M."/>
            <person name="Kolonay J.F."/>
            <person name="Beanan M.J."/>
            <person name="Dodson R.J."/>
            <person name="Brinkac L.M."/>
            <person name="Gwinn M.L."/>
            <person name="DeBoy R.T."/>
            <person name="Madpu R."/>
            <person name="Daugherty S.C."/>
            <person name="Durkin A.S."/>
            <person name="Haft D.H."/>
            <person name="Nelson W.C."/>
            <person name="Peterson J.D."/>
            <person name="Pop M."/>
            <person name="Khouri H.M."/>
            <person name="Radune D."/>
            <person name="Benton J.L."/>
            <person name="Mahamoud Y."/>
            <person name="Jiang L."/>
            <person name="Hance I.R."/>
            <person name="Weidman J.F."/>
            <person name="Berry K.J."/>
            <person name="Plaut R.D."/>
            <person name="Wolf A.M."/>
            <person name="Watkins K.L."/>
            <person name="Nierman W.C."/>
            <person name="Hazen A."/>
            <person name="Cline R.T."/>
            <person name="Redmond C."/>
            <person name="Thwaite J.E."/>
            <person name="White O."/>
            <person name="Salzberg S.L."/>
            <person name="Thomason B."/>
            <person name="Friedlander A.M."/>
            <person name="Koehler T.M."/>
            <person name="Hanna P.C."/>
            <person name="Kolstoe A.-B."/>
            <person name="Fraser C.M."/>
        </authorList>
    </citation>
    <scope>NUCLEOTIDE SEQUENCE [LARGE SCALE GENOMIC DNA]</scope>
    <source>
        <strain>Ames / isolate Porton</strain>
    </source>
</reference>
<reference key="2">
    <citation type="journal article" date="2009" name="J. Bacteriol.">
        <title>The complete genome sequence of Bacillus anthracis Ames 'Ancestor'.</title>
        <authorList>
            <person name="Ravel J."/>
            <person name="Jiang L."/>
            <person name="Stanley S.T."/>
            <person name="Wilson M.R."/>
            <person name="Decker R.S."/>
            <person name="Read T.D."/>
            <person name="Worsham P."/>
            <person name="Keim P.S."/>
            <person name="Salzberg S.L."/>
            <person name="Fraser-Liggett C.M."/>
            <person name="Rasko D.A."/>
        </authorList>
    </citation>
    <scope>NUCLEOTIDE SEQUENCE [LARGE SCALE GENOMIC DNA]</scope>
    <source>
        <strain>Ames ancestor</strain>
    </source>
</reference>
<reference key="3">
    <citation type="submission" date="2004-01" db="EMBL/GenBank/DDBJ databases">
        <title>Complete genome sequence of Bacillus anthracis Sterne.</title>
        <authorList>
            <person name="Brettin T.S."/>
            <person name="Bruce D."/>
            <person name="Challacombe J.F."/>
            <person name="Gilna P."/>
            <person name="Han C."/>
            <person name="Hill K."/>
            <person name="Hitchcock P."/>
            <person name="Jackson P."/>
            <person name="Keim P."/>
            <person name="Longmire J."/>
            <person name="Lucas S."/>
            <person name="Okinaka R."/>
            <person name="Richardson P."/>
            <person name="Rubin E."/>
            <person name="Tice H."/>
        </authorList>
    </citation>
    <scope>NUCLEOTIDE SEQUENCE [LARGE SCALE GENOMIC DNA]</scope>
    <source>
        <strain>Sterne</strain>
    </source>
</reference>
<proteinExistence type="evidence at protein level"/>
<organism>
    <name type="scientific">Bacillus anthracis</name>
    <dbReference type="NCBI Taxonomy" id="1392"/>
    <lineage>
        <taxon>Bacteria</taxon>
        <taxon>Bacillati</taxon>
        <taxon>Bacillota</taxon>
        <taxon>Bacilli</taxon>
        <taxon>Bacillales</taxon>
        <taxon>Bacillaceae</taxon>
        <taxon>Bacillus</taxon>
        <taxon>Bacillus cereus group</taxon>
    </lineage>
</organism>
<protein>
    <recommendedName>
        <fullName evidence="1">Adenylosuccinate synthetase</fullName>
        <shortName evidence="1">AMPSase</shortName>
        <shortName evidence="1">AdSS</shortName>
        <ecNumber evidence="1">6.3.4.4</ecNumber>
    </recommendedName>
    <alternativeName>
        <fullName evidence="1">IMP--aspartate ligase</fullName>
    </alternativeName>
</protein>
<sequence length="429" mass="47424">MSSVVVVGTQWGDEGKGKITDFLSEHAEVVARYQGGNNAGHTIVFGGVKYKLHLIPSGIFYKEKICVIGNGLVVDPKALLEELKYLHDRGVSTDNLRVSNRAHVILPYHLKQDELEEASKGDNKIGTTKKGIGPAYMDKAARIGIRMADLLDREAFKEKLEQNLAQKNRLFEKMYDTEGFSVDEIFEEYFEYGQQIAQYVCDTSVVLNDALDNNHRVLFEGAQGVMLDIDHGTYPFVTSSNPIAGGVTVGTGVGPAKVTRVVGVCKAYTSRVGDGPFPTELHDEIGHQIREVGREYGTTTGRPRRVGWFDSVVVRHARRVSGLTDLSLNSIDVLTGIPTLKICVAYKCDGKVIDEVPANLNILAKCEPVYEELPGWTEDITGVRSLDELPENARKYVERVSELTGIQLSMFSVGPDRNQTNIVRNVYEA</sequence>
<feature type="chain" id="PRO_0000095143" description="Adenylosuccinate synthetase">
    <location>
        <begin position="1"/>
        <end position="429"/>
    </location>
</feature>
<feature type="active site" description="Proton acceptor" evidence="1">
    <location>
        <position position="13"/>
    </location>
</feature>
<feature type="active site" description="Proton donor" evidence="1">
    <location>
        <position position="41"/>
    </location>
</feature>
<feature type="binding site" evidence="1">
    <location>
        <begin position="12"/>
        <end position="18"/>
    </location>
    <ligand>
        <name>GTP</name>
        <dbReference type="ChEBI" id="CHEBI:37565"/>
    </ligand>
</feature>
<feature type="binding site" description="in other chain" evidence="1">
    <location>
        <begin position="13"/>
        <end position="16"/>
    </location>
    <ligand>
        <name>IMP</name>
        <dbReference type="ChEBI" id="CHEBI:58053"/>
        <note>ligand shared between dimeric partners</note>
    </ligand>
</feature>
<feature type="binding site" evidence="1">
    <location>
        <position position="13"/>
    </location>
    <ligand>
        <name>Mg(2+)</name>
        <dbReference type="ChEBI" id="CHEBI:18420"/>
    </ligand>
</feature>
<feature type="binding site" description="in other chain" evidence="1">
    <location>
        <begin position="38"/>
        <end position="41"/>
    </location>
    <ligand>
        <name>IMP</name>
        <dbReference type="ChEBI" id="CHEBI:58053"/>
        <note>ligand shared between dimeric partners</note>
    </ligand>
</feature>
<feature type="binding site" evidence="1">
    <location>
        <begin position="40"/>
        <end position="42"/>
    </location>
    <ligand>
        <name>GTP</name>
        <dbReference type="ChEBI" id="CHEBI:37565"/>
    </ligand>
</feature>
<feature type="binding site" evidence="1">
    <location>
        <position position="40"/>
    </location>
    <ligand>
        <name>Mg(2+)</name>
        <dbReference type="ChEBI" id="CHEBI:18420"/>
    </ligand>
</feature>
<feature type="binding site" description="in other chain" evidence="1">
    <location>
        <position position="128"/>
    </location>
    <ligand>
        <name>IMP</name>
        <dbReference type="ChEBI" id="CHEBI:58053"/>
        <note>ligand shared between dimeric partners</note>
    </ligand>
</feature>
<feature type="binding site" evidence="1">
    <location>
        <position position="142"/>
    </location>
    <ligand>
        <name>IMP</name>
        <dbReference type="ChEBI" id="CHEBI:58053"/>
        <note>ligand shared between dimeric partners</note>
    </ligand>
</feature>
<feature type="binding site" description="in other chain" evidence="1">
    <location>
        <position position="223"/>
    </location>
    <ligand>
        <name>IMP</name>
        <dbReference type="ChEBI" id="CHEBI:58053"/>
        <note>ligand shared between dimeric partners</note>
    </ligand>
</feature>
<feature type="binding site" description="in other chain" evidence="1">
    <location>
        <position position="238"/>
    </location>
    <ligand>
        <name>IMP</name>
        <dbReference type="ChEBI" id="CHEBI:58053"/>
        <note>ligand shared between dimeric partners</note>
    </ligand>
</feature>
<feature type="binding site" evidence="1">
    <location>
        <begin position="298"/>
        <end position="304"/>
    </location>
    <ligand>
        <name>substrate</name>
    </ligand>
</feature>
<feature type="binding site" description="in other chain" evidence="1">
    <location>
        <position position="302"/>
    </location>
    <ligand>
        <name>IMP</name>
        <dbReference type="ChEBI" id="CHEBI:58053"/>
        <note>ligand shared between dimeric partners</note>
    </ligand>
</feature>
<feature type="binding site" evidence="1">
    <location>
        <position position="304"/>
    </location>
    <ligand>
        <name>GTP</name>
        <dbReference type="ChEBI" id="CHEBI:37565"/>
    </ligand>
</feature>
<feature type="binding site" evidence="1">
    <location>
        <begin position="330"/>
        <end position="332"/>
    </location>
    <ligand>
        <name>GTP</name>
        <dbReference type="ChEBI" id="CHEBI:37565"/>
    </ligand>
</feature>
<feature type="binding site" evidence="1">
    <location>
        <begin position="412"/>
        <end position="414"/>
    </location>
    <ligand>
        <name>GTP</name>
        <dbReference type="ChEBI" id="CHEBI:37565"/>
    </ligand>
</feature>
<feature type="strand" evidence="2">
    <location>
        <begin position="3"/>
        <end position="12"/>
    </location>
</feature>
<feature type="helix" evidence="2">
    <location>
        <begin position="16"/>
        <end position="24"/>
    </location>
</feature>
<feature type="strand" evidence="2">
    <location>
        <begin position="28"/>
        <end position="32"/>
    </location>
</feature>
<feature type="strand" evidence="2">
    <location>
        <begin position="42"/>
        <end position="45"/>
    </location>
</feature>
<feature type="strand" evidence="2">
    <location>
        <begin position="48"/>
        <end position="51"/>
    </location>
</feature>
<feature type="strand" evidence="2">
    <location>
        <begin position="53"/>
        <end position="55"/>
    </location>
</feature>
<feature type="turn" evidence="2">
    <location>
        <begin position="57"/>
        <end position="60"/>
    </location>
</feature>
<feature type="strand" evidence="2">
    <location>
        <begin position="64"/>
        <end position="68"/>
    </location>
</feature>
<feature type="strand" evidence="2">
    <location>
        <begin position="72"/>
        <end position="74"/>
    </location>
</feature>
<feature type="helix" evidence="2">
    <location>
        <begin position="76"/>
        <end position="87"/>
    </location>
</feature>
<feature type="turn" evidence="2">
    <location>
        <begin position="88"/>
        <end position="90"/>
    </location>
</feature>
<feature type="strand" evidence="2">
    <location>
        <begin position="96"/>
        <end position="99"/>
    </location>
</feature>
<feature type="helix" evidence="2">
    <location>
        <begin position="107"/>
        <end position="119"/>
    </location>
</feature>
<feature type="helix" evidence="2">
    <location>
        <begin position="120"/>
        <end position="123"/>
    </location>
</feature>
<feature type="strand" evidence="2">
    <location>
        <begin position="129"/>
        <end position="131"/>
    </location>
</feature>
<feature type="helix" evidence="2">
    <location>
        <begin position="132"/>
        <end position="140"/>
    </location>
</feature>
<feature type="helix" evidence="2">
    <location>
        <begin position="147"/>
        <end position="150"/>
    </location>
</feature>
<feature type="helix" evidence="2">
    <location>
        <begin position="153"/>
        <end position="175"/>
    </location>
</feature>
<feature type="helix" evidence="2">
    <location>
        <begin position="182"/>
        <end position="196"/>
    </location>
</feature>
<feature type="helix" evidence="2">
    <location>
        <begin position="197"/>
        <end position="199"/>
    </location>
</feature>
<feature type="helix" evidence="2">
    <location>
        <begin position="203"/>
        <end position="212"/>
    </location>
</feature>
<feature type="strand" evidence="2">
    <location>
        <begin position="217"/>
        <end position="220"/>
    </location>
</feature>
<feature type="helix" evidence="2">
    <location>
        <begin position="225"/>
        <end position="227"/>
    </location>
</feature>
<feature type="turn" evidence="2">
    <location>
        <begin position="229"/>
        <end position="231"/>
    </location>
</feature>
<feature type="helix" evidence="2">
    <location>
        <begin position="246"/>
        <end position="251"/>
    </location>
</feature>
<feature type="helix" evidence="2">
    <location>
        <begin position="255"/>
        <end position="257"/>
    </location>
</feature>
<feature type="strand" evidence="2">
    <location>
        <begin position="260"/>
        <end position="275"/>
    </location>
</feature>
<feature type="helix" evidence="2">
    <location>
        <begin position="284"/>
        <end position="292"/>
    </location>
</feature>
<feature type="turn" evidence="2">
    <location>
        <begin position="298"/>
        <end position="300"/>
    </location>
</feature>
<feature type="strand" evidence="2">
    <location>
        <begin position="305"/>
        <end position="307"/>
    </location>
</feature>
<feature type="helix" evidence="2">
    <location>
        <begin position="311"/>
        <end position="320"/>
    </location>
</feature>
<feature type="strand" evidence="2">
    <location>
        <begin position="325"/>
        <end position="329"/>
    </location>
</feature>
<feature type="helix" evidence="2">
    <location>
        <begin position="331"/>
        <end position="334"/>
    </location>
</feature>
<feature type="strand" evidence="2">
    <location>
        <begin position="338"/>
        <end position="348"/>
    </location>
</feature>
<feature type="strand" evidence="2">
    <location>
        <begin position="351"/>
        <end position="355"/>
    </location>
</feature>
<feature type="helix" evidence="2">
    <location>
        <begin position="360"/>
        <end position="364"/>
    </location>
</feature>
<feature type="strand" evidence="2">
    <location>
        <begin position="367"/>
        <end position="374"/>
    </location>
</feature>
<feature type="helix" evidence="2">
    <location>
        <begin position="386"/>
        <end position="388"/>
    </location>
</feature>
<feature type="helix" evidence="2">
    <location>
        <begin position="391"/>
        <end position="404"/>
    </location>
</feature>
<feature type="strand" evidence="2">
    <location>
        <begin position="408"/>
        <end position="416"/>
    </location>
</feature>
<feature type="helix" evidence="2">
    <location>
        <begin position="417"/>
        <end position="419"/>
    </location>
</feature>
<feature type="strand" evidence="2">
    <location>
        <begin position="420"/>
        <end position="422"/>
    </location>
</feature>
<evidence type="ECO:0000255" key="1">
    <source>
        <dbReference type="HAMAP-Rule" id="MF_00011"/>
    </source>
</evidence>
<evidence type="ECO:0007829" key="2">
    <source>
        <dbReference type="PDB" id="4M9D"/>
    </source>
</evidence>